<protein>
    <recommendedName>
        <fullName evidence="1">Aspartyl/glutamyl-tRNA(Asn/Gln) amidotransferase subunit B</fullName>
        <shortName evidence="1">Asp/Glu-ADT subunit B</shortName>
        <ecNumber evidence="1">6.3.5.-</ecNumber>
    </recommendedName>
</protein>
<organism>
    <name type="scientific">Bartonella tribocorum (strain CIP 105476 / IBS 506)</name>
    <dbReference type="NCBI Taxonomy" id="382640"/>
    <lineage>
        <taxon>Bacteria</taxon>
        <taxon>Pseudomonadati</taxon>
        <taxon>Pseudomonadota</taxon>
        <taxon>Alphaproteobacteria</taxon>
        <taxon>Hyphomicrobiales</taxon>
        <taxon>Bartonellaceae</taxon>
        <taxon>Bartonella</taxon>
    </lineage>
</organism>
<gene>
    <name evidence="1" type="primary">gatB</name>
    <name type="ordered locus">BT_0882</name>
</gene>
<name>GATB_BART1</name>
<evidence type="ECO:0000255" key="1">
    <source>
        <dbReference type="HAMAP-Rule" id="MF_00121"/>
    </source>
</evidence>
<reference key="1">
    <citation type="journal article" date="2007" name="Nat. Genet.">
        <title>Genomic analysis of Bartonella identifies type IV secretion systems as host adaptability factors.</title>
        <authorList>
            <person name="Saenz H.L."/>
            <person name="Engel P."/>
            <person name="Stoeckli M.C."/>
            <person name="Lanz C."/>
            <person name="Raddatz G."/>
            <person name="Vayssier-Taussat M."/>
            <person name="Birtles R."/>
            <person name="Schuster S.C."/>
            <person name="Dehio C."/>
        </authorList>
    </citation>
    <scope>NUCLEOTIDE SEQUENCE [LARGE SCALE GENOMIC DNA]</scope>
    <source>
        <strain>CIP 105476 / IBS 506</strain>
    </source>
</reference>
<proteinExistence type="inferred from homology"/>
<dbReference type="EC" id="6.3.5.-" evidence="1"/>
<dbReference type="EMBL" id="AM260525">
    <property type="protein sequence ID" value="CAK01286.1"/>
    <property type="molecule type" value="Genomic_DNA"/>
</dbReference>
<dbReference type="RefSeq" id="WP_012231448.1">
    <property type="nucleotide sequence ID" value="NC_010161.1"/>
</dbReference>
<dbReference type="SMR" id="A9ISC3"/>
<dbReference type="KEGG" id="btr:BT_0882"/>
<dbReference type="eggNOG" id="COG0064">
    <property type="taxonomic scope" value="Bacteria"/>
</dbReference>
<dbReference type="HOGENOM" id="CLU_019240_0_0_5"/>
<dbReference type="Proteomes" id="UP000001592">
    <property type="component" value="Chromosome"/>
</dbReference>
<dbReference type="GO" id="GO:0050566">
    <property type="term" value="F:asparaginyl-tRNA synthase (glutamine-hydrolyzing) activity"/>
    <property type="evidence" value="ECO:0007669"/>
    <property type="project" value="RHEA"/>
</dbReference>
<dbReference type="GO" id="GO:0005524">
    <property type="term" value="F:ATP binding"/>
    <property type="evidence" value="ECO:0007669"/>
    <property type="project" value="UniProtKB-KW"/>
</dbReference>
<dbReference type="GO" id="GO:0050567">
    <property type="term" value="F:glutaminyl-tRNA synthase (glutamine-hydrolyzing) activity"/>
    <property type="evidence" value="ECO:0007669"/>
    <property type="project" value="UniProtKB-UniRule"/>
</dbReference>
<dbReference type="GO" id="GO:0070681">
    <property type="term" value="P:glutaminyl-tRNAGln biosynthesis via transamidation"/>
    <property type="evidence" value="ECO:0007669"/>
    <property type="project" value="TreeGrafter"/>
</dbReference>
<dbReference type="GO" id="GO:0006412">
    <property type="term" value="P:translation"/>
    <property type="evidence" value="ECO:0007669"/>
    <property type="project" value="UniProtKB-UniRule"/>
</dbReference>
<dbReference type="FunFam" id="1.10.10.410:FF:000001">
    <property type="entry name" value="Aspartyl/glutamyl-tRNA(Asn/Gln) amidotransferase subunit B"/>
    <property type="match status" value="1"/>
</dbReference>
<dbReference type="FunFam" id="1.10.150.380:FF:000001">
    <property type="entry name" value="Aspartyl/glutamyl-tRNA(Asn/Gln) amidotransferase subunit B"/>
    <property type="match status" value="1"/>
</dbReference>
<dbReference type="Gene3D" id="1.10.10.410">
    <property type="match status" value="1"/>
</dbReference>
<dbReference type="Gene3D" id="1.10.150.380">
    <property type="entry name" value="GatB domain, N-terminal subdomain"/>
    <property type="match status" value="1"/>
</dbReference>
<dbReference type="HAMAP" id="MF_00121">
    <property type="entry name" value="GatB"/>
    <property type="match status" value="1"/>
</dbReference>
<dbReference type="InterPro" id="IPR017959">
    <property type="entry name" value="Asn/Gln-tRNA_amidoTrfase_suB/E"/>
</dbReference>
<dbReference type="InterPro" id="IPR006075">
    <property type="entry name" value="Asn/Gln-tRNA_Trfase_suB/E_cat"/>
</dbReference>
<dbReference type="InterPro" id="IPR018027">
    <property type="entry name" value="Asn/Gln_amidotransferase"/>
</dbReference>
<dbReference type="InterPro" id="IPR003789">
    <property type="entry name" value="Asn/Gln_tRNA_amidoTrase-B-like"/>
</dbReference>
<dbReference type="InterPro" id="IPR004413">
    <property type="entry name" value="GatB"/>
</dbReference>
<dbReference type="InterPro" id="IPR042114">
    <property type="entry name" value="GatB_C_1"/>
</dbReference>
<dbReference type="InterPro" id="IPR023168">
    <property type="entry name" value="GatB_Yqey_C_2"/>
</dbReference>
<dbReference type="InterPro" id="IPR017958">
    <property type="entry name" value="Gln-tRNA_amidoTrfase_suB_CS"/>
</dbReference>
<dbReference type="InterPro" id="IPR014746">
    <property type="entry name" value="Gln_synth/guanido_kin_cat_dom"/>
</dbReference>
<dbReference type="NCBIfam" id="TIGR00133">
    <property type="entry name" value="gatB"/>
    <property type="match status" value="1"/>
</dbReference>
<dbReference type="NCBIfam" id="NF004012">
    <property type="entry name" value="PRK05477.1-2"/>
    <property type="match status" value="1"/>
</dbReference>
<dbReference type="NCBIfam" id="NF004014">
    <property type="entry name" value="PRK05477.1-4"/>
    <property type="match status" value="1"/>
</dbReference>
<dbReference type="NCBIfam" id="NF004015">
    <property type="entry name" value="PRK05477.1-5"/>
    <property type="match status" value="1"/>
</dbReference>
<dbReference type="PANTHER" id="PTHR11659">
    <property type="entry name" value="GLUTAMYL-TRNA GLN AMIDOTRANSFERASE SUBUNIT B MITOCHONDRIAL AND PROKARYOTIC PET112-RELATED"/>
    <property type="match status" value="1"/>
</dbReference>
<dbReference type="PANTHER" id="PTHR11659:SF0">
    <property type="entry name" value="GLUTAMYL-TRNA(GLN) AMIDOTRANSFERASE SUBUNIT B, MITOCHONDRIAL"/>
    <property type="match status" value="1"/>
</dbReference>
<dbReference type="Pfam" id="PF02934">
    <property type="entry name" value="GatB_N"/>
    <property type="match status" value="1"/>
</dbReference>
<dbReference type="Pfam" id="PF02637">
    <property type="entry name" value="GatB_Yqey"/>
    <property type="match status" value="1"/>
</dbReference>
<dbReference type="SMART" id="SM00845">
    <property type="entry name" value="GatB_Yqey"/>
    <property type="match status" value="1"/>
</dbReference>
<dbReference type="SUPFAM" id="SSF89095">
    <property type="entry name" value="GatB/YqeY motif"/>
    <property type="match status" value="1"/>
</dbReference>
<dbReference type="SUPFAM" id="SSF55931">
    <property type="entry name" value="Glutamine synthetase/guanido kinase"/>
    <property type="match status" value="1"/>
</dbReference>
<dbReference type="PROSITE" id="PS01234">
    <property type="entry name" value="GATB"/>
    <property type="match status" value="1"/>
</dbReference>
<sequence>MSIIDTRTPDSKHFISGVTGDWEVIIGMEVHAQIISNSKLFSGASAKFGAEPNNHVSLIDAAMPGMLPVLNEECVRQAVRTGLGLKARINLKSVFDRKNYFYPDLPQGYQISQFHYPIVGEGKIIISVGPDSNGQFEDIEVGIERLHLEQDAGKSMHDQHPTMSFVDLNRSGVALMEIVSKPDMRSSDEAKAYMTKLRTIVRYLGTCDGNMDEGSMRADVNVSVRRPGEDFGTRCEIKNVNSIRFIGQAIEYEARRQIAILEDGGVIEQETRLFDATKGETRSMRSKEEAHDYRYFPDPDLLPLEFDQAFVDSLAADLPELPDAIKARFVKEMGLTVYDASILVTEKAIADYFEEVAYGRDGKIVANWVINDLLGALNKDNREIEESPVSPNQLGSIIDLIKEGTISGKIAKDLFEIVWNEGGDPRQIVEERSMKQVTDTKAIERAVDEIVANNADKVAQAKQKPALAGWFVGQVMKATGGKANPQTVNELVKMKLGID</sequence>
<accession>A9ISC3</accession>
<keyword id="KW-0067">ATP-binding</keyword>
<keyword id="KW-0436">Ligase</keyword>
<keyword id="KW-0547">Nucleotide-binding</keyword>
<keyword id="KW-0648">Protein biosynthesis</keyword>
<comment type="function">
    <text evidence="1">Allows the formation of correctly charged Asn-tRNA(Asn) or Gln-tRNA(Gln) through the transamidation of misacylated Asp-tRNA(Asn) or Glu-tRNA(Gln) in organisms which lack either or both of asparaginyl-tRNA or glutaminyl-tRNA synthetases. The reaction takes place in the presence of glutamine and ATP through an activated phospho-Asp-tRNA(Asn) or phospho-Glu-tRNA(Gln).</text>
</comment>
<comment type="catalytic activity">
    <reaction evidence="1">
        <text>L-glutamyl-tRNA(Gln) + L-glutamine + ATP + H2O = L-glutaminyl-tRNA(Gln) + L-glutamate + ADP + phosphate + H(+)</text>
        <dbReference type="Rhea" id="RHEA:17521"/>
        <dbReference type="Rhea" id="RHEA-COMP:9681"/>
        <dbReference type="Rhea" id="RHEA-COMP:9684"/>
        <dbReference type="ChEBI" id="CHEBI:15377"/>
        <dbReference type="ChEBI" id="CHEBI:15378"/>
        <dbReference type="ChEBI" id="CHEBI:29985"/>
        <dbReference type="ChEBI" id="CHEBI:30616"/>
        <dbReference type="ChEBI" id="CHEBI:43474"/>
        <dbReference type="ChEBI" id="CHEBI:58359"/>
        <dbReference type="ChEBI" id="CHEBI:78520"/>
        <dbReference type="ChEBI" id="CHEBI:78521"/>
        <dbReference type="ChEBI" id="CHEBI:456216"/>
    </reaction>
</comment>
<comment type="catalytic activity">
    <reaction evidence="1">
        <text>L-aspartyl-tRNA(Asn) + L-glutamine + ATP + H2O = L-asparaginyl-tRNA(Asn) + L-glutamate + ADP + phosphate + 2 H(+)</text>
        <dbReference type="Rhea" id="RHEA:14513"/>
        <dbReference type="Rhea" id="RHEA-COMP:9674"/>
        <dbReference type="Rhea" id="RHEA-COMP:9677"/>
        <dbReference type="ChEBI" id="CHEBI:15377"/>
        <dbReference type="ChEBI" id="CHEBI:15378"/>
        <dbReference type="ChEBI" id="CHEBI:29985"/>
        <dbReference type="ChEBI" id="CHEBI:30616"/>
        <dbReference type="ChEBI" id="CHEBI:43474"/>
        <dbReference type="ChEBI" id="CHEBI:58359"/>
        <dbReference type="ChEBI" id="CHEBI:78515"/>
        <dbReference type="ChEBI" id="CHEBI:78516"/>
        <dbReference type="ChEBI" id="CHEBI:456216"/>
    </reaction>
</comment>
<comment type="subunit">
    <text evidence="1">Heterotrimer of A, B and C subunits.</text>
</comment>
<comment type="similarity">
    <text evidence="1">Belongs to the GatB/GatE family. GatB subfamily.</text>
</comment>
<feature type="chain" id="PRO_1000076150" description="Aspartyl/glutamyl-tRNA(Asn/Gln) amidotransferase subunit B">
    <location>
        <begin position="1"/>
        <end position="499"/>
    </location>
</feature>